<reference key="1">
    <citation type="journal article" date="2004" name="Proc. Natl. Acad. Sci. U.S.A.">
        <title>Complete genomes of two clinical Staphylococcus aureus strains: evidence for the rapid evolution of virulence and drug resistance.</title>
        <authorList>
            <person name="Holden M.T.G."/>
            <person name="Feil E.J."/>
            <person name="Lindsay J.A."/>
            <person name="Peacock S.J."/>
            <person name="Day N.P.J."/>
            <person name="Enright M.C."/>
            <person name="Foster T.J."/>
            <person name="Moore C.E."/>
            <person name="Hurst L."/>
            <person name="Atkin R."/>
            <person name="Barron A."/>
            <person name="Bason N."/>
            <person name="Bentley S.D."/>
            <person name="Chillingworth C."/>
            <person name="Chillingworth T."/>
            <person name="Churcher C."/>
            <person name="Clark L."/>
            <person name="Corton C."/>
            <person name="Cronin A."/>
            <person name="Doggett J."/>
            <person name="Dowd L."/>
            <person name="Feltwell T."/>
            <person name="Hance Z."/>
            <person name="Harris B."/>
            <person name="Hauser H."/>
            <person name="Holroyd S."/>
            <person name="Jagels K."/>
            <person name="James K.D."/>
            <person name="Lennard N."/>
            <person name="Line A."/>
            <person name="Mayes R."/>
            <person name="Moule S."/>
            <person name="Mungall K."/>
            <person name="Ormond D."/>
            <person name="Quail M.A."/>
            <person name="Rabbinowitsch E."/>
            <person name="Rutherford K.M."/>
            <person name="Sanders M."/>
            <person name="Sharp S."/>
            <person name="Simmonds M."/>
            <person name="Stevens K."/>
            <person name="Whitehead S."/>
            <person name="Barrell B.G."/>
            <person name="Spratt B.G."/>
            <person name="Parkhill J."/>
        </authorList>
    </citation>
    <scope>NUCLEOTIDE SEQUENCE [LARGE SCALE GENOMIC DNA]</scope>
    <source>
        <strain>MRSA252</strain>
    </source>
</reference>
<accession>Q6GIB3</accession>
<dbReference type="EC" id="2.3.1.-"/>
<dbReference type="EMBL" id="BX571856">
    <property type="protein sequence ID" value="CAG39943.1"/>
    <property type="molecule type" value="Genomic_DNA"/>
</dbReference>
<dbReference type="RefSeq" id="WP_001044234.1">
    <property type="nucleotide sequence ID" value="NC_002952.2"/>
</dbReference>
<dbReference type="SMR" id="Q6GIB3"/>
<dbReference type="KEGG" id="sar:SAR0937"/>
<dbReference type="HOGENOM" id="CLU_005679_11_2_9"/>
<dbReference type="Proteomes" id="UP000000596">
    <property type="component" value="Chromosome"/>
</dbReference>
<dbReference type="GO" id="GO:0005886">
    <property type="term" value="C:plasma membrane"/>
    <property type="evidence" value="ECO:0007669"/>
    <property type="project" value="UniProtKB-SubCell"/>
</dbReference>
<dbReference type="GO" id="GO:0016747">
    <property type="term" value="F:acyltransferase activity, transferring groups other than amino-acyl groups"/>
    <property type="evidence" value="ECO:0007669"/>
    <property type="project" value="InterPro"/>
</dbReference>
<dbReference type="GO" id="GO:0009103">
    <property type="term" value="P:lipopolysaccharide biosynthetic process"/>
    <property type="evidence" value="ECO:0007669"/>
    <property type="project" value="TreeGrafter"/>
</dbReference>
<dbReference type="CDD" id="cd01840">
    <property type="entry name" value="SGNH_hydrolase_yrhL_like"/>
    <property type="match status" value="1"/>
</dbReference>
<dbReference type="FunFam" id="3.40.50.1110:FF:000006">
    <property type="entry name" value="O-acetyltransferase OatA"/>
    <property type="match status" value="1"/>
</dbReference>
<dbReference type="Gene3D" id="3.40.50.1110">
    <property type="entry name" value="SGNH hydrolase"/>
    <property type="match status" value="1"/>
</dbReference>
<dbReference type="InterPro" id="IPR002656">
    <property type="entry name" value="Acyl_transf_3_dom"/>
</dbReference>
<dbReference type="InterPro" id="IPR050879">
    <property type="entry name" value="Acyltransferase_3"/>
</dbReference>
<dbReference type="InterPro" id="IPR036514">
    <property type="entry name" value="SGNH_hydro_sf"/>
</dbReference>
<dbReference type="PANTHER" id="PTHR23028">
    <property type="entry name" value="ACETYLTRANSFERASE"/>
    <property type="match status" value="1"/>
</dbReference>
<dbReference type="PANTHER" id="PTHR23028:SF53">
    <property type="entry name" value="ACYL_TRANSF_3 DOMAIN-CONTAINING PROTEIN"/>
    <property type="match status" value="1"/>
</dbReference>
<dbReference type="Pfam" id="PF01757">
    <property type="entry name" value="Acyl_transf_3"/>
    <property type="match status" value="1"/>
</dbReference>
<dbReference type="SUPFAM" id="SSF52266">
    <property type="entry name" value="SGNH hydrolase"/>
    <property type="match status" value="1"/>
</dbReference>
<feature type="chain" id="PRO_0000208094" description="Putative O-acetyltransferase SAR0937">
    <location>
        <begin position="1"/>
        <end position="604"/>
    </location>
</feature>
<feature type="transmembrane region" description="Helical" evidence="2">
    <location>
        <begin position="15"/>
        <end position="35"/>
    </location>
</feature>
<feature type="transmembrane region" description="Helical" evidence="2">
    <location>
        <begin position="43"/>
        <end position="63"/>
    </location>
</feature>
<feature type="transmembrane region" description="Helical" evidence="2">
    <location>
        <begin position="85"/>
        <end position="105"/>
    </location>
</feature>
<feature type="transmembrane region" description="Helical" evidence="2">
    <location>
        <begin position="150"/>
        <end position="170"/>
    </location>
</feature>
<feature type="transmembrane region" description="Helical" evidence="2">
    <location>
        <begin position="176"/>
        <end position="196"/>
    </location>
</feature>
<feature type="transmembrane region" description="Helical" evidence="2">
    <location>
        <begin position="212"/>
        <end position="232"/>
    </location>
</feature>
<feature type="transmembrane region" description="Helical" evidence="2">
    <location>
        <begin position="240"/>
        <end position="260"/>
    </location>
</feature>
<feature type="transmembrane region" description="Helical" evidence="2">
    <location>
        <begin position="267"/>
        <end position="287"/>
    </location>
</feature>
<feature type="transmembrane region" description="Helical" evidence="2">
    <location>
        <begin position="310"/>
        <end position="330"/>
    </location>
</feature>
<feature type="transmembrane region" description="Helical" evidence="2">
    <location>
        <begin position="332"/>
        <end position="352"/>
    </location>
</feature>
<feature type="transmembrane region" description="Helical" evidence="2">
    <location>
        <begin position="377"/>
        <end position="397"/>
    </location>
</feature>
<feature type="active site" evidence="1">
    <location>
        <position position="459"/>
    </location>
</feature>
<feature type="active site" evidence="1">
    <location>
        <position position="581"/>
    </location>
</feature>
<feature type="active site" evidence="1">
    <location>
        <position position="584"/>
    </location>
</feature>
<proteinExistence type="inferred from homology"/>
<organism>
    <name type="scientific">Staphylococcus aureus (strain MRSA252)</name>
    <dbReference type="NCBI Taxonomy" id="282458"/>
    <lineage>
        <taxon>Bacteria</taxon>
        <taxon>Bacillati</taxon>
        <taxon>Bacillota</taxon>
        <taxon>Bacilli</taxon>
        <taxon>Bacillales</taxon>
        <taxon>Staphylococcaceae</taxon>
        <taxon>Staphylococcus</taxon>
    </lineage>
</organism>
<protein>
    <recommendedName>
        <fullName>Putative O-acetyltransferase SAR0937</fullName>
        <ecNumber>2.3.1.-</ecNumber>
    </recommendedName>
</protein>
<evidence type="ECO:0000250" key="1">
    <source>
        <dbReference type="UniProtKB" id="Q2FV54"/>
    </source>
</evidence>
<evidence type="ECO:0000255" key="2"/>
<evidence type="ECO:0000305" key="3"/>
<sequence>MNKTKGFTKYKKMRYMPGLDGLRAIAVLGIIIYHLNKQWLTGGFLGVDTFFVISGYLITSLLLKEYDDTGIIKLKSFWIRRLKRLLPAVIVLLMVVGTATLLLKSDNIIRVKHDIIAAIFYVSNWWYIAKDVNYFEQFSFMPLKHLWSLAIEEQFYIFFPVILVTLLLTIKKRYKIGFIFWGVSIISLGLMMFIYSINGDHSRVYFGTDTRLQTLLLGVILAFLWPPFKLKNDPPKVVKYVIDSIGSLSFIVLILLFFIINDETNWIYDGGFYLISILTLFIIASVVHPSTWIAKIFSNPVLVFIGKRSYSLYLWHFAVISFVHSYYVDGQIPVYVYFIDISLTIIFAELSYRFIETPFRKEGIKALNWRSSYIPQFIRMVIVVTLLIPFMLILVGAFNKYGKDIIGEKANSFDTTIEDNYSMRIAPIDNIHIDGLVSEKKKESSDVYNNIKPLLIGDSVMVDIGESFKSSVPKSRIDGKVGRQLYQTLPLVKANYSQYKKSSDQVVLELGTNGDFTVKQLDDLLNQFGKAKIYLVNTRVPRIYEANVNRLLADAAKRKSNVTLIDWYKRSQGHSEYFAPDGVHLEYKGVLALKDEILKALKKK</sequence>
<keyword id="KW-0012">Acyltransferase</keyword>
<keyword id="KW-1003">Cell membrane</keyword>
<keyword id="KW-0472">Membrane</keyword>
<keyword id="KW-0808">Transferase</keyword>
<keyword id="KW-0812">Transmembrane</keyword>
<keyword id="KW-1133">Transmembrane helix</keyword>
<comment type="subcellular location">
    <subcellularLocation>
        <location evidence="3">Cell membrane</location>
        <topology evidence="3">Multi-pass membrane protein</topology>
    </subcellularLocation>
</comment>
<comment type="similarity">
    <text evidence="3">Belongs to the acyltransferase 3 family.</text>
</comment>
<name>OTRF1_STAAR</name>
<gene>
    <name type="ordered locus">SAR0937</name>
</gene>